<dbReference type="EMBL" id="AM406670">
    <property type="protein sequence ID" value="CAL92759.1"/>
    <property type="molecule type" value="Genomic_DNA"/>
</dbReference>
<dbReference type="RefSeq" id="WP_011763878.1">
    <property type="nucleotide sequence ID" value="NC_008702.1"/>
</dbReference>
<dbReference type="SMR" id="A1K1Q4"/>
<dbReference type="STRING" id="62928.azo0141"/>
<dbReference type="KEGG" id="azo:azo0141"/>
<dbReference type="eggNOG" id="COG0445">
    <property type="taxonomic scope" value="Bacteria"/>
</dbReference>
<dbReference type="HOGENOM" id="CLU_007831_2_2_4"/>
<dbReference type="Proteomes" id="UP000002588">
    <property type="component" value="Chromosome"/>
</dbReference>
<dbReference type="GO" id="GO:0005829">
    <property type="term" value="C:cytosol"/>
    <property type="evidence" value="ECO:0007669"/>
    <property type="project" value="TreeGrafter"/>
</dbReference>
<dbReference type="GO" id="GO:0050660">
    <property type="term" value="F:flavin adenine dinucleotide binding"/>
    <property type="evidence" value="ECO:0007669"/>
    <property type="project" value="UniProtKB-UniRule"/>
</dbReference>
<dbReference type="GO" id="GO:0030488">
    <property type="term" value="P:tRNA methylation"/>
    <property type="evidence" value="ECO:0007669"/>
    <property type="project" value="TreeGrafter"/>
</dbReference>
<dbReference type="GO" id="GO:0002098">
    <property type="term" value="P:tRNA wobble uridine modification"/>
    <property type="evidence" value="ECO:0007669"/>
    <property type="project" value="InterPro"/>
</dbReference>
<dbReference type="FunFam" id="1.10.10.1800:FF:000001">
    <property type="entry name" value="tRNA uridine 5-carboxymethylaminomethyl modification enzyme MnmG"/>
    <property type="match status" value="1"/>
</dbReference>
<dbReference type="FunFam" id="1.10.150.570:FF:000001">
    <property type="entry name" value="tRNA uridine 5-carboxymethylaminomethyl modification enzyme MnmG"/>
    <property type="match status" value="1"/>
</dbReference>
<dbReference type="FunFam" id="3.50.50.60:FF:000002">
    <property type="entry name" value="tRNA uridine 5-carboxymethylaminomethyl modification enzyme MnmG"/>
    <property type="match status" value="1"/>
</dbReference>
<dbReference type="FunFam" id="3.50.50.60:FF:000010">
    <property type="entry name" value="tRNA uridine 5-carboxymethylaminomethyl modification enzyme MnmG"/>
    <property type="match status" value="1"/>
</dbReference>
<dbReference type="Gene3D" id="3.50.50.60">
    <property type="entry name" value="FAD/NAD(P)-binding domain"/>
    <property type="match status" value="2"/>
</dbReference>
<dbReference type="Gene3D" id="1.10.150.570">
    <property type="entry name" value="GidA associated domain, C-terminal subdomain"/>
    <property type="match status" value="1"/>
</dbReference>
<dbReference type="Gene3D" id="1.10.10.1800">
    <property type="entry name" value="tRNA uridine 5-carboxymethylaminomethyl modification enzyme MnmG/GidA"/>
    <property type="match status" value="1"/>
</dbReference>
<dbReference type="HAMAP" id="MF_00129">
    <property type="entry name" value="MnmG_GidA"/>
    <property type="match status" value="1"/>
</dbReference>
<dbReference type="InterPro" id="IPR036188">
    <property type="entry name" value="FAD/NAD-bd_sf"/>
</dbReference>
<dbReference type="InterPro" id="IPR049312">
    <property type="entry name" value="GIDA_C_N"/>
</dbReference>
<dbReference type="InterPro" id="IPR004416">
    <property type="entry name" value="MnmG"/>
</dbReference>
<dbReference type="InterPro" id="IPR002218">
    <property type="entry name" value="MnmG-rel"/>
</dbReference>
<dbReference type="InterPro" id="IPR020595">
    <property type="entry name" value="MnmG-rel_CS"/>
</dbReference>
<dbReference type="InterPro" id="IPR026904">
    <property type="entry name" value="MnmG_C"/>
</dbReference>
<dbReference type="InterPro" id="IPR047001">
    <property type="entry name" value="MnmG_C_subdom"/>
</dbReference>
<dbReference type="InterPro" id="IPR044920">
    <property type="entry name" value="MnmG_C_subdom_sf"/>
</dbReference>
<dbReference type="InterPro" id="IPR040131">
    <property type="entry name" value="MnmG_N"/>
</dbReference>
<dbReference type="NCBIfam" id="TIGR00136">
    <property type="entry name" value="mnmG_gidA"/>
    <property type="match status" value="1"/>
</dbReference>
<dbReference type="PANTHER" id="PTHR11806">
    <property type="entry name" value="GLUCOSE INHIBITED DIVISION PROTEIN A"/>
    <property type="match status" value="1"/>
</dbReference>
<dbReference type="PANTHER" id="PTHR11806:SF0">
    <property type="entry name" value="PROTEIN MTO1 HOMOLOG, MITOCHONDRIAL"/>
    <property type="match status" value="1"/>
</dbReference>
<dbReference type="Pfam" id="PF01134">
    <property type="entry name" value="GIDA"/>
    <property type="match status" value="1"/>
</dbReference>
<dbReference type="Pfam" id="PF21680">
    <property type="entry name" value="GIDA_C_1st"/>
    <property type="match status" value="1"/>
</dbReference>
<dbReference type="Pfam" id="PF13932">
    <property type="entry name" value="SAM_GIDA_C"/>
    <property type="match status" value="1"/>
</dbReference>
<dbReference type="SMART" id="SM01228">
    <property type="entry name" value="GIDA_assoc_3"/>
    <property type="match status" value="1"/>
</dbReference>
<dbReference type="SUPFAM" id="SSF51905">
    <property type="entry name" value="FAD/NAD(P)-binding domain"/>
    <property type="match status" value="1"/>
</dbReference>
<dbReference type="PROSITE" id="PS01280">
    <property type="entry name" value="GIDA_1"/>
    <property type="match status" value="1"/>
</dbReference>
<dbReference type="PROSITE" id="PS01281">
    <property type="entry name" value="GIDA_2"/>
    <property type="match status" value="1"/>
</dbReference>
<reference key="1">
    <citation type="journal article" date="2006" name="Nat. Biotechnol.">
        <title>Complete genome of the mutualistic, N2-fixing grass endophyte Azoarcus sp. strain BH72.</title>
        <authorList>
            <person name="Krause A."/>
            <person name="Ramakumar A."/>
            <person name="Bartels D."/>
            <person name="Battistoni F."/>
            <person name="Bekel T."/>
            <person name="Boch J."/>
            <person name="Boehm M."/>
            <person name="Friedrich F."/>
            <person name="Hurek T."/>
            <person name="Krause L."/>
            <person name="Linke B."/>
            <person name="McHardy A.C."/>
            <person name="Sarkar A."/>
            <person name="Schneiker S."/>
            <person name="Syed A.A."/>
            <person name="Thauer R."/>
            <person name="Vorhoelter F.-J."/>
            <person name="Weidner S."/>
            <person name="Puehler A."/>
            <person name="Reinhold-Hurek B."/>
            <person name="Kaiser O."/>
            <person name="Goesmann A."/>
        </authorList>
    </citation>
    <scope>NUCLEOTIDE SEQUENCE [LARGE SCALE GENOMIC DNA]</scope>
    <source>
        <strain>BH72</strain>
    </source>
</reference>
<protein>
    <recommendedName>
        <fullName evidence="1">tRNA uridine 5-carboxymethylaminomethyl modification enzyme MnmG</fullName>
    </recommendedName>
    <alternativeName>
        <fullName evidence="1">Glucose-inhibited division protein A</fullName>
    </alternativeName>
</protein>
<sequence>MLYPTRFDVIVVGGGHAGTEAALAAARMGCRTLLLSHNIETLGQMSCNPSIGGIGKGHLVKEVDALGGAMAAATDEGGIQFRILNASKGPAVRATRAQADRVLYKAAIRKRLENQPNLWLFQQAVDDLTVAGDRVTGVVTQIGLRFEAPAVVLTAGTFLNGLIHVGLEHYSAGRAGDPPAISLGQRLKELALPQGRLKTGTPPRLDARSIDFSVMTVQPGDDPVPVFSFLGSAAQHPAQLPCWMTHTNTRTHDVIRANLDRSPMYSGVIEGVGPRYCPSIEDKIHRFADKDSHNIFLEPEGLTTHEIYPNGISTSLPFDVQLEIVRSIRGLENAHILRPGYAIEYDYFDPRNLKSSLETKSIGGLFFAGQINGTTGYEEAAAQGLLAGANAALQVQGREAWCPRRDEAYLGVLVDDLITRGVSEPYRMFTSRAEYRLQLREDNADLRLTEKGRELGLVDDVRWAAFCAKREAIERETARLKTSLARPDLIPVADQERVLGKTLEREARYFELLRRPETTYASLMSLPGAPEQPETDPQVVEQLEIAAKYQGYIDRQQDEVAKQLQAESTRLPADLDYAEVRGLSKEVQQKLNLHKPETIGQAGRIQGITPAAISLLLVWLKRRDLAARSERRSA</sequence>
<name>MNMG_AZOSB</name>
<organism>
    <name type="scientific">Azoarcus sp. (strain BH72)</name>
    <dbReference type="NCBI Taxonomy" id="418699"/>
    <lineage>
        <taxon>Bacteria</taxon>
        <taxon>Pseudomonadati</taxon>
        <taxon>Pseudomonadota</taxon>
        <taxon>Betaproteobacteria</taxon>
        <taxon>Rhodocyclales</taxon>
        <taxon>Zoogloeaceae</taxon>
        <taxon>Azoarcus</taxon>
    </lineage>
</organism>
<keyword id="KW-0963">Cytoplasm</keyword>
<keyword id="KW-0274">FAD</keyword>
<keyword id="KW-0285">Flavoprotein</keyword>
<keyword id="KW-0520">NAD</keyword>
<keyword id="KW-1185">Reference proteome</keyword>
<keyword id="KW-0819">tRNA processing</keyword>
<feature type="chain" id="PRO_1000016546" description="tRNA uridine 5-carboxymethylaminomethyl modification enzyme MnmG">
    <location>
        <begin position="1"/>
        <end position="634"/>
    </location>
</feature>
<feature type="binding site" evidence="1">
    <location>
        <begin position="13"/>
        <end position="18"/>
    </location>
    <ligand>
        <name>FAD</name>
        <dbReference type="ChEBI" id="CHEBI:57692"/>
    </ligand>
</feature>
<feature type="binding site" evidence="1">
    <location>
        <begin position="273"/>
        <end position="287"/>
    </location>
    <ligand>
        <name>NAD(+)</name>
        <dbReference type="ChEBI" id="CHEBI:57540"/>
    </ligand>
</feature>
<gene>
    <name evidence="1" type="primary">mnmG</name>
    <name evidence="1" type="synonym">gidA</name>
    <name type="ordered locus">azo0141</name>
</gene>
<accession>A1K1Q4</accession>
<proteinExistence type="inferred from homology"/>
<evidence type="ECO:0000255" key="1">
    <source>
        <dbReference type="HAMAP-Rule" id="MF_00129"/>
    </source>
</evidence>
<comment type="function">
    <text evidence="1">NAD-binding protein involved in the addition of a carboxymethylaminomethyl (cmnm) group at the wobble position (U34) of certain tRNAs, forming tRNA-cmnm(5)s(2)U34.</text>
</comment>
<comment type="cofactor">
    <cofactor evidence="1">
        <name>FAD</name>
        <dbReference type="ChEBI" id="CHEBI:57692"/>
    </cofactor>
</comment>
<comment type="subunit">
    <text evidence="1">Homodimer. Heterotetramer of two MnmE and two MnmG subunits.</text>
</comment>
<comment type="subcellular location">
    <subcellularLocation>
        <location evidence="1">Cytoplasm</location>
    </subcellularLocation>
</comment>
<comment type="similarity">
    <text evidence="1">Belongs to the MnmG family.</text>
</comment>